<protein>
    <recommendedName>
        <fullName evidence="1">2,3-bisphosphoglycerate-independent phosphoglycerate mutase</fullName>
        <shortName evidence="1">BPG-independent PGAM</shortName>
        <shortName evidence="1">Phosphoglyceromutase</shortName>
        <shortName evidence="1">iPGM</shortName>
        <ecNumber evidence="1">5.4.2.12</ecNumber>
    </recommendedName>
</protein>
<comment type="function">
    <text evidence="1">Essential for rapid growth and for sporulation. Catalyzes the interconversion of 2-phosphoglycerate and 3-phosphoglycerate.</text>
</comment>
<comment type="catalytic activity">
    <reaction evidence="1">
        <text>(2R)-2-phosphoglycerate = (2R)-3-phosphoglycerate</text>
        <dbReference type="Rhea" id="RHEA:15901"/>
        <dbReference type="ChEBI" id="CHEBI:58272"/>
        <dbReference type="ChEBI" id="CHEBI:58289"/>
        <dbReference type="EC" id="5.4.2.12"/>
    </reaction>
</comment>
<comment type="cofactor">
    <cofactor evidence="1">
        <name>Mn(2+)</name>
        <dbReference type="ChEBI" id="CHEBI:29035"/>
    </cofactor>
    <text evidence="1">Binds 2 manganese ions per subunit.</text>
</comment>
<comment type="pathway">
    <text evidence="1">Carbohydrate degradation; glycolysis; pyruvate from D-glyceraldehyde 3-phosphate: step 3/5.</text>
</comment>
<comment type="subunit">
    <text evidence="1">Monomer.</text>
</comment>
<comment type="similarity">
    <text evidence="1">Belongs to the BPG-independent phosphoglycerate mutase family.</text>
</comment>
<sequence>MSKKPAALIILDGFGLRNETVGNAVAQAKKPNFDRYWNQYPHQTLTASGEAVGLPEGQMGNSEVGHLNIGAGRIVYQSLTRVNVAIREGEFERNQTFLDAIKNAKDNDKALHLFGLLSDGGVHSHINHLFALLKLAKSEGLTKVYIHGFLDGRDVGPQTAKTYIQQLNEQVEEIGVGEIASISGRYYSMDRDKRWDRVEKAYRAMAYGEGPSYRSAMDVVDDSYANGIHDEFVIPSVITKENGEPVAKIHDGDSVIFYNFRPDRAIQISNTFTNKDFRDFDRGENHPKNLYFVCLTHFSESVDGYVAFKPVNLDNTVGEVLAQHGLKQLRIAETEKYPHVTFFMSGGREEEFPGEERILINSPKVATYDLKPEMSAYEVKDALVKEIAADKHDAIILNFANPDMVGHSGMVEPTIKAIEAVDECLGEVVDAIIAKGGHAIITADHGNADILITETGEPHTAHTTNPVPVIVTKEGVTLREGGILGDLAPTLLDLLGVEKPKEMTGTSLIQK</sequence>
<name>GPMI_BACVZ</name>
<dbReference type="EC" id="5.4.2.12" evidence="1"/>
<dbReference type="EMBL" id="CP000560">
    <property type="protein sequence ID" value="ABS75458.1"/>
    <property type="molecule type" value="Genomic_DNA"/>
</dbReference>
<dbReference type="RefSeq" id="WP_012118484.1">
    <property type="nucleotide sequence ID" value="NC_009725.2"/>
</dbReference>
<dbReference type="SMR" id="A7Z8Y2"/>
<dbReference type="GeneID" id="93082271"/>
<dbReference type="KEGG" id="bay:RBAM_031270"/>
<dbReference type="HOGENOM" id="CLU_026099_2_0_9"/>
<dbReference type="UniPathway" id="UPA00109">
    <property type="reaction ID" value="UER00186"/>
</dbReference>
<dbReference type="Proteomes" id="UP000001120">
    <property type="component" value="Chromosome"/>
</dbReference>
<dbReference type="GO" id="GO:0005829">
    <property type="term" value="C:cytosol"/>
    <property type="evidence" value="ECO:0007669"/>
    <property type="project" value="TreeGrafter"/>
</dbReference>
<dbReference type="GO" id="GO:0030145">
    <property type="term" value="F:manganese ion binding"/>
    <property type="evidence" value="ECO:0007669"/>
    <property type="project" value="UniProtKB-UniRule"/>
</dbReference>
<dbReference type="GO" id="GO:0004619">
    <property type="term" value="F:phosphoglycerate mutase activity"/>
    <property type="evidence" value="ECO:0007669"/>
    <property type="project" value="UniProtKB-EC"/>
</dbReference>
<dbReference type="GO" id="GO:0006007">
    <property type="term" value="P:glucose catabolic process"/>
    <property type="evidence" value="ECO:0007669"/>
    <property type="project" value="InterPro"/>
</dbReference>
<dbReference type="GO" id="GO:0006096">
    <property type="term" value="P:glycolytic process"/>
    <property type="evidence" value="ECO:0007669"/>
    <property type="project" value="UniProtKB-UniRule"/>
</dbReference>
<dbReference type="GO" id="GO:0030435">
    <property type="term" value="P:sporulation resulting in formation of a cellular spore"/>
    <property type="evidence" value="ECO:0007669"/>
    <property type="project" value="UniProtKB-KW"/>
</dbReference>
<dbReference type="CDD" id="cd16010">
    <property type="entry name" value="iPGM"/>
    <property type="match status" value="1"/>
</dbReference>
<dbReference type="FunFam" id="3.40.1450.10:FF:000001">
    <property type="entry name" value="2,3-bisphosphoglycerate-independent phosphoglycerate mutase"/>
    <property type="match status" value="1"/>
</dbReference>
<dbReference type="FunFam" id="3.40.720.10:FF:000001">
    <property type="entry name" value="2,3-bisphosphoglycerate-independent phosphoglycerate mutase"/>
    <property type="match status" value="1"/>
</dbReference>
<dbReference type="Gene3D" id="3.40.720.10">
    <property type="entry name" value="Alkaline Phosphatase, subunit A"/>
    <property type="match status" value="1"/>
</dbReference>
<dbReference type="Gene3D" id="3.40.1450.10">
    <property type="entry name" value="BPG-independent phosphoglycerate mutase, domain B"/>
    <property type="match status" value="1"/>
</dbReference>
<dbReference type="HAMAP" id="MF_01038">
    <property type="entry name" value="GpmI"/>
    <property type="match status" value="1"/>
</dbReference>
<dbReference type="InterPro" id="IPR017850">
    <property type="entry name" value="Alkaline_phosphatase_core_sf"/>
</dbReference>
<dbReference type="InterPro" id="IPR011258">
    <property type="entry name" value="BPG-indep_PGM_N"/>
</dbReference>
<dbReference type="InterPro" id="IPR006124">
    <property type="entry name" value="Metalloenzyme"/>
</dbReference>
<dbReference type="InterPro" id="IPR036646">
    <property type="entry name" value="PGAM_B_sf"/>
</dbReference>
<dbReference type="InterPro" id="IPR005995">
    <property type="entry name" value="Pgm_bpd_ind"/>
</dbReference>
<dbReference type="NCBIfam" id="TIGR01307">
    <property type="entry name" value="pgm_bpd_ind"/>
    <property type="match status" value="1"/>
</dbReference>
<dbReference type="PANTHER" id="PTHR31637">
    <property type="entry name" value="2,3-BISPHOSPHOGLYCERATE-INDEPENDENT PHOSPHOGLYCERATE MUTASE"/>
    <property type="match status" value="1"/>
</dbReference>
<dbReference type="PANTHER" id="PTHR31637:SF0">
    <property type="entry name" value="2,3-BISPHOSPHOGLYCERATE-INDEPENDENT PHOSPHOGLYCERATE MUTASE"/>
    <property type="match status" value="1"/>
</dbReference>
<dbReference type="Pfam" id="PF06415">
    <property type="entry name" value="iPGM_N"/>
    <property type="match status" value="1"/>
</dbReference>
<dbReference type="Pfam" id="PF01676">
    <property type="entry name" value="Metalloenzyme"/>
    <property type="match status" value="1"/>
</dbReference>
<dbReference type="PIRSF" id="PIRSF001492">
    <property type="entry name" value="IPGAM"/>
    <property type="match status" value="1"/>
</dbReference>
<dbReference type="SUPFAM" id="SSF64158">
    <property type="entry name" value="2,3-Bisphosphoglycerate-independent phosphoglycerate mutase, substrate-binding domain"/>
    <property type="match status" value="1"/>
</dbReference>
<dbReference type="SUPFAM" id="SSF53649">
    <property type="entry name" value="Alkaline phosphatase-like"/>
    <property type="match status" value="1"/>
</dbReference>
<proteinExistence type="inferred from homology"/>
<evidence type="ECO:0000255" key="1">
    <source>
        <dbReference type="HAMAP-Rule" id="MF_01038"/>
    </source>
</evidence>
<organism>
    <name type="scientific">Bacillus velezensis (strain DSM 23117 / BGSC 10A6 / LMG 26770 / FZB42)</name>
    <name type="common">Bacillus amyloliquefaciens subsp. plantarum</name>
    <dbReference type="NCBI Taxonomy" id="326423"/>
    <lineage>
        <taxon>Bacteria</taxon>
        <taxon>Bacillati</taxon>
        <taxon>Bacillota</taxon>
        <taxon>Bacilli</taxon>
        <taxon>Bacillales</taxon>
        <taxon>Bacillaceae</taxon>
        <taxon>Bacillus</taxon>
        <taxon>Bacillus amyloliquefaciens group</taxon>
    </lineage>
</organism>
<accession>A7Z8Y2</accession>
<reference key="1">
    <citation type="journal article" date="2007" name="Nat. Biotechnol.">
        <title>Comparative analysis of the complete genome sequence of the plant growth-promoting bacterium Bacillus amyloliquefaciens FZB42.</title>
        <authorList>
            <person name="Chen X.H."/>
            <person name="Koumoutsi A."/>
            <person name="Scholz R."/>
            <person name="Eisenreich A."/>
            <person name="Schneider K."/>
            <person name="Heinemeyer I."/>
            <person name="Morgenstern B."/>
            <person name="Voss B."/>
            <person name="Hess W.R."/>
            <person name="Reva O."/>
            <person name="Junge H."/>
            <person name="Voigt B."/>
            <person name="Jungblut P.R."/>
            <person name="Vater J."/>
            <person name="Suessmuth R."/>
            <person name="Liesegang H."/>
            <person name="Strittmatter A."/>
            <person name="Gottschalk G."/>
            <person name="Borriss R."/>
        </authorList>
    </citation>
    <scope>NUCLEOTIDE SEQUENCE [LARGE SCALE GENOMIC DNA]</scope>
    <source>
        <strain>DSM 23117 / BGSC 10A6 / LMG 26770 / FZB42</strain>
    </source>
</reference>
<feature type="chain" id="PRO_1000063947" description="2,3-bisphosphoglycerate-independent phosphoglycerate mutase">
    <location>
        <begin position="1"/>
        <end position="511"/>
    </location>
</feature>
<feature type="active site" description="Phosphoserine intermediate" evidence="1">
    <location>
        <position position="62"/>
    </location>
</feature>
<feature type="binding site" evidence="1">
    <location>
        <position position="12"/>
    </location>
    <ligand>
        <name>Mn(2+)</name>
        <dbReference type="ChEBI" id="CHEBI:29035"/>
        <label>2</label>
    </ligand>
</feature>
<feature type="binding site" evidence="1">
    <location>
        <position position="62"/>
    </location>
    <ligand>
        <name>Mn(2+)</name>
        <dbReference type="ChEBI" id="CHEBI:29035"/>
        <label>2</label>
    </ligand>
</feature>
<feature type="binding site" evidence="1">
    <location>
        <position position="123"/>
    </location>
    <ligand>
        <name>substrate</name>
    </ligand>
</feature>
<feature type="binding site" evidence="1">
    <location>
        <begin position="153"/>
        <end position="154"/>
    </location>
    <ligand>
        <name>substrate</name>
    </ligand>
</feature>
<feature type="binding site" evidence="1">
    <location>
        <position position="185"/>
    </location>
    <ligand>
        <name>substrate</name>
    </ligand>
</feature>
<feature type="binding site" evidence="1">
    <location>
        <position position="191"/>
    </location>
    <ligand>
        <name>substrate</name>
    </ligand>
</feature>
<feature type="binding site" evidence="1">
    <location>
        <begin position="261"/>
        <end position="264"/>
    </location>
    <ligand>
        <name>substrate</name>
    </ligand>
</feature>
<feature type="binding site" evidence="1">
    <location>
        <position position="336"/>
    </location>
    <ligand>
        <name>substrate</name>
    </ligand>
</feature>
<feature type="binding site" evidence="1">
    <location>
        <position position="403"/>
    </location>
    <ligand>
        <name>Mn(2+)</name>
        <dbReference type="ChEBI" id="CHEBI:29035"/>
        <label>1</label>
    </ligand>
</feature>
<feature type="binding site" evidence="1">
    <location>
        <position position="407"/>
    </location>
    <ligand>
        <name>Mn(2+)</name>
        <dbReference type="ChEBI" id="CHEBI:29035"/>
        <label>1</label>
    </ligand>
</feature>
<feature type="binding site" evidence="1">
    <location>
        <position position="444"/>
    </location>
    <ligand>
        <name>Mn(2+)</name>
        <dbReference type="ChEBI" id="CHEBI:29035"/>
        <label>2</label>
    </ligand>
</feature>
<feature type="binding site" evidence="1">
    <location>
        <position position="445"/>
    </location>
    <ligand>
        <name>Mn(2+)</name>
        <dbReference type="ChEBI" id="CHEBI:29035"/>
        <label>2</label>
    </ligand>
</feature>
<feature type="binding site" evidence="1">
    <location>
        <position position="462"/>
    </location>
    <ligand>
        <name>Mn(2+)</name>
        <dbReference type="ChEBI" id="CHEBI:29035"/>
        <label>1</label>
    </ligand>
</feature>
<feature type="modified residue" description="Phosphotyrosine" evidence="1">
    <location>
        <position position="36"/>
    </location>
</feature>
<gene>
    <name evidence="1" type="primary">gpmI</name>
    <name type="ordered locus">RBAM_031270</name>
</gene>
<keyword id="KW-0324">Glycolysis</keyword>
<keyword id="KW-0413">Isomerase</keyword>
<keyword id="KW-0464">Manganese</keyword>
<keyword id="KW-0479">Metal-binding</keyword>
<keyword id="KW-0597">Phosphoprotein</keyword>
<keyword id="KW-0749">Sporulation</keyword>